<feature type="chain" id="PRO_0000180605" description="Glucose-6-phosphate isomerase">
    <location>
        <begin position="1"/>
        <end position="521"/>
    </location>
</feature>
<feature type="active site" description="Proton donor" evidence="1">
    <location>
        <position position="327"/>
    </location>
</feature>
<feature type="active site" evidence="1">
    <location>
        <position position="358"/>
    </location>
</feature>
<feature type="active site" evidence="1">
    <location>
        <position position="486"/>
    </location>
</feature>
<name>G6PI_BORPE</name>
<accession>Q7VUF4</accession>
<dbReference type="EC" id="5.3.1.9" evidence="1"/>
<dbReference type="EMBL" id="BX640420">
    <property type="protein sequence ID" value="CAE43409.1"/>
    <property type="molecule type" value="Genomic_DNA"/>
</dbReference>
<dbReference type="RefSeq" id="NP_881707.1">
    <property type="nucleotide sequence ID" value="NC_002929.2"/>
</dbReference>
<dbReference type="RefSeq" id="WP_003808462.1">
    <property type="nucleotide sequence ID" value="NZ_CP039022.1"/>
</dbReference>
<dbReference type="SMR" id="Q7VUF4"/>
<dbReference type="STRING" id="257313.BP3142"/>
<dbReference type="PaxDb" id="257313-BP3142"/>
<dbReference type="GeneID" id="93202549"/>
<dbReference type="KEGG" id="bpe:BP3142"/>
<dbReference type="PATRIC" id="fig|257313.5.peg.3393"/>
<dbReference type="eggNOG" id="COG0166">
    <property type="taxonomic scope" value="Bacteria"/>
</dbReference>
<dbReference type="HOGENOM" id="CLU_017947_3_1_4"/>
<dbReference type="UniPathway" id="UPA00109">
    <property type="reaction ID" value="UER00181"/>
</dbReference>
<dbReference type="UniPathway" id="UPA00138"/>
<dbReference type="Proteomes" id="UP000002676">
    <property type="component" value="Chromosome"/>
</dbReference>
<dbReference type="GO" id="GO:0005829">
    <property type="term" value="C:cytosol"/>
    <property type="evidence" value="ECO:0007669"/>
    <property type="project" value="TreeGrafter"/>
</dbReference>
<dbReference type="GO" id="GO:0097367">
    <property type="term" value="F:carbohydrate derivative binding"/>
    <property type="evidence" value="ECO:0007669"/>
    <property type="project" value="InterPro"/>
</dbReference>
<dbReference type="GO" id="GO:0004347">
    <property type="term" value="F:glucose-6-phosphate isomerase activity"/>
    <property type="evidence" value="ECO:0007669"/>
    <property type="project" value="UniProtKB-UniRule"/>
</dbReference>
<dbReference type="GO" id="GO:0048029">
    <property type="term" value="F:monosaccharide binding"/>
    <property type="evidence" value="ECO:0007669"/>
    <property type="project" value="TreeGrafter"/>
</dbReference>
<dbReference type="GO" id="GO:0006094">
    <property type="term" value="P:gluconeogenesis"/>
    <property type="evidence" value="ECO:0007669"/>
    <property type="project" value="UniProtKB-UniRule"/>
</dbReference>
<dbReference type="GO" id="GO:0051156">
    <property type="term" value="P:glucose 6-phosphate metabolic process"/>
    <property type="evidence" value="ECO:0007669"/>
    <property type="project" value="TreeGrafter"/>
</dbReference>
<dbReference type="GO" id="GO:0006096">
    <property type="term" value="P:glycolytic process"/>
    <property type="evidence" value="ECO:0007669"/>
    <property type="project" value="UniProtKB-UniRule"/>
</dbReference>
<dbReference type="CDD" id="cd05015">
    <property type="entry name" value="SIS_PGI_1"/>
    <property type="match status" value="1"/>
</dbReference>
<dbReference type="CDD" id="cd05016">
    <property type="entry name" value="SIS_PGI_2"/>
    <property type="match status" value="1"/>
</dbReference>
<dbReference type="Gene3D" id="1.10.1390.10">
    <property type="match status" value="1"/>
</dbReference>
<dbReference type="Gene3D" id="3.40.50.10490">
    <property type="entry name" value="Glucose-6-phosphate isomerase like protein, domain 1"/>
    <property type="match status" value="2"/>
</dbReference>
<dbReference type="HAMAP" id="MF_00473">
    <property type="entry name" value="G6P_isomerase"/>
    <property type="match status" value="1"/>
</dbReference>
<dbReference type="InterPro" id="IPR001672">
    <property type="entry name" value="G6P_Isomerase"/>
</dbReference>
<dbReference type="InterPro" id="IPR023096">
    <property type="entry name" value="G6P_Isomerase_C"/>
</dbReference>
<dbReference type="InterPro" id="IPR018189">
    <property type="entry name" value="Phosphoglucose_isomerase_CS"/>
</dbReference>
<dbReference type="InterPro" id="IPR046348">
    <property type="entry name" value="SIS_dom_sf"/>
</dbReference>
<dbReference type="InterPro" id="IPR035476">
    <property type="entry name" value="SIS_PGI_1"/>
</dbReference>
<dbReference type="InterPro" id="IPR035482">
    <property type="entry name" value="SIS_PGI_2"/>
</dbReference>
<dbReference type="NCBIfam" id="NF001211">
    <property type="entry name" value="PRK00179.1"/>
    <property type="match status" value="1"/>
</dbReference>
<dbReference type="PANTHER" id="PTHR11469">
    <property type="entry name" value="GLUCOSE-6-PHOSPHATE ISOMERASE"/>
    <property type="match status" value="1"/>
</dbReference>
<dbReference type="PANTHER" id="PTHR11469:SF1">
    <property type="entry name" value="GLUCOSE-6-PHOSPHATE ISOMERASE"/>
    <property type="match status" value="1"/>
</dbReference>
<dbReference type="Pfam" id="PF00342">
    <property type="entry name" value="PGI"/>
    <property type="match status" value="1"/>
</dbReference>
<dbReference type="PRINTS" id="PR00662">
    <property type="entry name" value="G6PISOMERASE"/>
</dbReference>
<dbReference type="SUPFAM" id="SSF53697">
    <property type="entry name" value="SIS domain"/>
    <property type="match status" value="1"/>
</dbReference>
<dbReference type="PROSITE" id="PS00765">
    <property type="entry name" value="P_GLUCOSE_ISOMERASE_1"/>
    <property type="match status" value="1"/>
</dbReference>
<dbReference type="PROSITE" id="PS00174">
    <property type="entry name" value="P_GLUCOSE_ISOMERASE_2"/>
    <property type="match status" value="1"/>
</dbReference>
<dbReference type="PROSITE" id="PS51463">
    <property type="entry name" value="P_GLUCOSE_ISOMERASE_3"/>
    <property type="match status" value="1"/>
</dbReference>
<reference key="1">
    <citation type="journal article" date="2003" name="Nat. Genet.">
        <title>Comparative analysis of the genome sequences of Bordetella pertussis, Bordetella parapertussis and Bordetella bronchiseptica.</title>
        <authorList>
            <person name="Parkhill J."/>
            <person name="Sebaihia M."/>
            <person name="Preston A."/>
            <person name="Murphy L.D."/>
            <person name="Thomson N.R."/>
            <person name="Harris D.E."/>
            <person name="Holden M.T.G."/>
            <person name="Churcher C.M."/>
            <person name="Bentley S.D."/>
            <person name="Mungall K.L."/>
            <person name="Cerdeno-Tarraga A.-M."/>
            <person name="Temple L."/>
            <person name="James K.D."/>
            <person name="Harris B."/>
            <person name="Quail M.A."/>
            <person name="Achtman M."/>
            <person name="Atkin R."/>
            <person name="Baker S."/>
            <person name="Basham D."/>
            <person name="Bason N."/>
            <person name="Cherevach I."/>
            <person name="Chillingworth T."/>
            <person name="Collins M."/>
            <person name="Cronin A."/>
            <person name="Davis P."/>
            <person name="Doggett J."/>
            <person name="Feltwell T."/>
            <person name="Goble A."/>
            <person name="Hamlin N."/>
            <person name="Hauser H."/>
            <person name="Holroyd S."/>
            <person name="Jagels K."/>
            <person name="Leather S."/>
            <person name="Moule S."/>
            <person name="Norberczak H."/>
            <person name="O'Neil S."/>
            <person name="Ormond D."/>
            <person name="Price C."/>
            <person name="Rabbinowitsch E."/>
            <person name="Rutter S."/>
            <person name="Sanders M."/>
            <person name="Saunders D."/>
            <person name="Seeger K."/>
            <person name="Sharp S."/>
            <person name="Simmonds M."/>
            <person name="Skelton J."/>
            <person name="Squares R."/>
            <person name="Squares S."/>
            <person name="Stevens K."/>
            <person name="Unwin L."/>
            <person name="Whitehead S."/>
            <person name="Barrell B.G."/>
            <person name="Maskell D.J."/>
        </authorList>
    </citation>
    <scope>NUCLEOTIDE SEQUENCE [LARGE SCALE GENOMIC DNA]</scope>
    <source>
        <strain>Tohama I / ATCC BAA-589 / NCTC 13251</strain>
    </source>
</reference>
<comment type="function">
    <text evidence="1">Catalyzes the reversible isomerization of glucose-6-phosphate to fructose-6-phosphate.</text>
</comment>
<comment type="catalytic activity">
    <reaction evidence="1">
        <text>alpha-D-glucose 6-phosphate = beta-D-fructose 6-phosphate</text>
        <dbReference type="Rhea" id="RHEA:11816"/>
        <dbReference type="ChEBI" id="CHEBI:57634"/>
        <dbReference type="ChEBI" id="CHEBI:58225"/>
        <dbReference type="EC" id="5.3.1.9"/>
    </reaction>
</comment>
<comment type="pathway">
    <text evidence="1">Carbohydrate biosynthesis; gluconeogenesis.</text>
</comment>
<comment type="pathway">
    <text evidence="1">Carbohydrate degradation; glycolysis; D-glyceraldehyde 3-phosphate and glycerone phosphate from D-glucose: step 2/4.</text>
</comment>
<comment type="subcellular location">
    <subcellularLocation>
        <location evidence="1">Cytoplasm</location>
    </subcellularLocation>
</comment>
<comment type="similarity">
    <text evidence="1">Belongs to the GPI family.</text>
</comment>
<protein>
    <recommendedName>
        <fullName evidence="1">Glucose-6-phosphate isomerase</fullName>
        <shortName evidence="1">GPI</shortName>
        <ecNumber evidence="1">5.3.1.9</ecNumber>
    </recommendedName>
    <alternativeName>
        <fullName evidence="1">Phosphoglucose isomerase</fullName>
        <shortName evidence="1">PGI</shortName>
    </alternativeName>
    <alternativeName>
        <fullName evidence="1">Phosphohexose isomerase</fullName>
        <shortName evidence="1">PHI</shortName>
    </alternativeName>
</protein>
<organism>
    <name type="scientific">Bordetella pertussis (strain Tohama I / ATCC BAA-589 / NCTC 13251)</name>
    <dbReference type="NCBI Taxonomy" id="257313"/>
    <lineage>
        <taxon>Bacteria</taxon>
        <taxon>Pseudomonadati</taxon>
        <taxon>Pseudomonadota</taxon>
        <taxon>Betaproteobacteria</taxon>
        <taxon>Burkholderiales</taxon>
        <taxon>Alcaligenaceae</taxon>
        <taxon>Bordetella</taxon>
    </lineage>
</organism>
<keyword id="KW-0963">Cytoplasm</keyword>
<keyword id="KW-0312">Gluconeogenesis</keyword>
<keyword id="KW-0324">Glycolysis</keyword>
<keyword id="KW-0413">Isomerase</keyword>
<keyword id="KW-1185">Reference proteome</keyword>
<evidence type="ECO:0000255" key="1">
    <source>
        <dbReference type="HAMAP-Rule" id="MF_00473"/>
    </source>
</evidence>
<proteinExistence type="inferred from homology"/>
<gene>
    <name evidence="1" type="primary">pgi</name>
    <name type="ordered locus">BP3142</name>
</gene>
<sequence length="521" mass="57164">MPTPLPSSSAWLAFADAARHSSRRGARLRVIEAAGLRVDLTAQAHSDDLDSAAEDLLAQQDFDNARAQLFDGGPANWTEHRPAWHTALRAARPPTPVAGAILGERDRLRRFVQDADMRGAYRHVLHLGIGGSDWGPRMVTRALRHNGLKREVRFASNVDSHAVADALHHLDPHDTLIIVASKSFTTTEPLANAEVAMNWLRNAGVADPVRQVVAITANVDAALDFGISPQHIFRFWDWVGGRYSLWSAIGLPVALALGCDALDELLAGAAAMDQHFLHTPMRRNAPLQMALAGVANRSVLGYGSLAITPYDSRLTHLVPWAQQLEMESLGKVAGHDGSPAGVPTGPVVWGMTGTDCQHTFFQWLHQDTAGAPVDFIVCEQADHPYDHFHKLLIANCLAQRAALLRGKPFDEALKEARLVESDPQQAEILAHHRVHPGGRPSTLIMLPRLSAHALGALLAMYEHKVFAQGVLWGINPFDQWGVEYGKALARNIIRELENPSSEVNQQDPSTRYWIDALRKQP</sequence>